<dbReference type="EMBL" id="DQ139886">
    <property type="protein sequence ID" value="AAZ75592.1"/>
    <property type="molecule type" value="mRNA"/>
</dbReference>
<dbReference type="SMR" id="Q2XXQ9"/>
<dbReference type="GO" id="GO:0005576">
    <property type="term" value="C:extracellular region"/>
    <property type="evidence" value="ECO:0007669"/>
    <property type="project" value="UniProtKB-SubCell"/>
</dbReference>
<dbReference type="GO" id="GO:0005246">
    <property type="term" value="F:calcium channel regulator activity"/>
    <property type="evidence" value="ECO:0007669"/>
    <property type="project" value="UniProtKB-KW"/>
</dbReference>
<dbReference type="GO" id="GO:0015459">
    <property type="term" value="F:potassium channel regulator activity"/>
    <property type="evidence" value="ECO:0007669"/>
    <property type="project" value="UniProtKB-KW"/>
</dbReference>
<dbReference type="GO" id="GO:0090729">
    <property type="term" value="F:toxin activity"/>
    <property type="evidence" value="ECO:0007669"/>
    <property type="project" value="UniProtKB-KW"/>
</dbReference>
<dbReference type="Gene3D" id="3.40.33.10">
    <property type="entry name" value="CAP"/>
    <property type="match status" value="1"/>
</dbReference>
<dbReference type="InterPro" id="IPR014044">
    <property type="entry name" value="CAP_dom"/>
</dbReference>
<dbReference type="InterPro" id="IPR035940">
    <property type="entry name" value="CAP_sf"/>
</dbReference>
<dbReference type="InterPro" id="IPR001283">
    <property type="entry name" value="CRISP-related"/>
</dbReference>
<dbReference type="PANTHER" id="PTHR10334">
    <property type="entry name" value="CYSTEINE-RICH SECRETORY PROTEIN-RELATED"/>
    <property type="match status" value="1"/>
</dbReference>
<dbReference type="Pfam" id="PF00188">
    <property type="entry name" value="CAP"/>
    <property type="match status" value="1"/>
</dbReference>
<dbReference type="SMART" id="SM00198">
    <property type="entry name" value="SCP"/>
    <property type="match status" value="1"/>
</dbReference>
<dbReference type="SUPFAM" id="SSF55797">
    <property type="entry name" value="PR-1-like"/>
    <property type="match status" value="1"/>
</dbReference>
<proteinExistence type="evidence at transcript level"/>
<organism>
    <name type="scientific">Varanus acanthurus</name>
    <name type="common">Ridge-tailed monitor</name>
    <dbReference type="NCBI Taxonomy" id="62035"/>
    <lineage>
        <taxon>Eukaryota</taxon>
        <taxon>Metazoa</taxon>
        <taxon>Chordata</taxon>
        <taxon>Craniata</taxon>
        <taxon>Vertebrata</taxon>
        <taxon>Euteleostomi</taxon>
        <taxon>Lepidosauria</taxon>
        <taxon>Squamata</taxon>
        <taxon>Bifurcata</taxon>
        <taxon>Unidentata</taxon>
        <taxon>Episquamata</taxon>
        <taxon>Toxicofera</taxon>
        <taxon>Anguimorpha</taxon>
        <taxon>Paleoanguimorpha</taxon>
        <taxon>Varanoidea</taxon>
        <taxon>Varanidae</taxon>
        <taxon>Varanus</taxon>
    </lineage>
</organism>
<evidence type="ECO:0000250" key="1"/>
<evidence type="ECO:0000255" key="2"/>
<evidence type="ECO:0000305" key="3"/>
<comment type="function">
    <text evidence="1">Blocks ryanodine receptors, and potassium channels.</text>
</comment>
<comment type="subcellular location">
    <subcellularLocation>
        <location evidence="1">Secreted</location>
    </subcellularLocation>
</comment>
<comment type="tissue specificity">
    <text>Expressed by the venom gland.</text>
</comment>
<comment type="PTM">
    <text evidence="1">Contains 8 disulfide bonds.</text>
</comment>
<comment type="similarity">
    <text evidence="3">Belongs to the CRISP family.</text>
</comment>
<name>CRVP6_VARAC</name>
<accession>Q2XXQ9</accession>
<sequence length="148" mass="16858">MILLKLYLTLAAILCQSRGTTSLDLDDLMTTNPEIQNEIINKHNDLRRTVDPPAKNMLKMSWDNIIAESAKRAALRCNQNEHTPVSGRTIGGVVCGENYFMSSNPRTWSFGIQSWFDERNYFKFGFGPTRAGVMVGHYTQKERCRPEV</sequence>
<protein>
    <recommendedName>
        <fullName>Cysteine-rich venom protein VAR6</fullName>
        <shortName>CRVP</shortName>
    </recommendedName>
    <alternativeName>
        <fullName>Cysteine-rich secretory protein VAR6</fullName>
        <shortName>CRISP-VAR6</shortName>
    </alternativeName>
</protein>
<reference key="1">
    <citation type="journal article" date="2006" name="Nature">
        <title>Early evolution of the venom system in lizards and snakes.</title>
        <authorList>
            <person name="Fry B.G."/>
            <person name="Vidal N."/>
            <person name="Norman J.A."/>
            <person name="Vonk F.J."/>
            <person name="Scheib H."/>
            <person name="Ramjan S.F.R."/>
            <person name="Kuruppu S."/>
            <person name="Fung K."/>
            <person name="Blair Hedges S."/>
            <person name="Richardson M.K."/>
            <person name="Hodgson W.C."/>
            <person name="Ignjatovic V."/>
            <person name="Summerhayes R."/>
            <person name="Kochva E."/>
        </authorList>
    </citation>
    <scope>NUCLEOTIDE SEQUENCE [LARGE SCALE MRNA]</scope>
    <source>
        <tissue>Venom gland</tissue>
    </source>
</reference>
<feature type="signal peptide" evidence="2">
    <location>
        <begin position="1"/>
        <end position="22"/>
    </location>
</feature>
<feature type="chain" id="PRO_0000380657" description="Cysteine-rich venom protein VAR6">
    <location>
        <begin position="23"/>
        <end position="148" status="greater than"/>
    </location>
</feature>
<feature type="domain" description="SCP">
    <location>
        <begin position="41"/>
        <end position="140"/>
    </location>
</feature>
<feature type="non-terminal residue">
    <location>
        <position position="148"/>
    </location>
</feature>
<keyword id="KW-0108">Calcium channel impairing toxin</keyword>
<keyword id="KW-1015">Disulfide bond</keyword>
<keyword id="KW-0872">Ion channel impairing toxin</keyword>
<keyword id="KW-0528">Neurotoxin</keyword>
<keyword id="KW-0632">Potassium channel impairing toxin</keyword>
<keyword id="KW-0964">Secreted</keyword>
<keyword id="KW-0732">Signal</keyword>
<keyword id="KW-0800">Toxin</keyword>